<comment type="function">
    <text evidence="2">Specifically cleaves the zymogen plasminogen to form the active enzyme plasmin.</text>
</comment>
<comment type="catalytic activity">
    <reaction>
        <text>Specific cleavage of Arg-|-Val bond in plasminogen to form plasmin.</text>
        <dbReference type="EC" id="3.4.21.73"/>
    </reaction>
</comment>
<comment type="activity regulation">
    <text evidence="2">Inhibited by SERPINA5 (By similarity). Inhibited by SERPINE1 (By similarity).</text>
</comment>
<comment type="subunit">
    <text evidence="2">Found in high and low molecular mass forms. Each consists of two chains, A and B. The high molecular mass form contains a long chain A which is cleaved to yield a short chain A. Forms heterodimer with SERPINA5. Binds LRP1B; binding is followed by internalization and degradation. Interacts with MRC2. Interacts with PLAUR. In complex with SERPINE1, interacts with PLAUR/uPAR. Interacts with SORL1 and LRP1, either alone or in complex with SERPINE1; these interactions are abolished in the presence of LRPAP1/RAP. The ternary complex composed of PLAUR-PLAU-PAI1 also interacts with SORLA.</text>
</comment>
<comment type="subcellular location">
    <subcellularLocation>
        <location evidence="2">Secreted</location>
    </subcellularLocation>
</comment>
<comment type="PTM">
    <text evidence="1">Phosphorylation of Ser-158 and Ser-323 abolishes proadhesive ability but does not interfere with receptor binding.</text>
</comment>
<comment type="PTM">
    <text evidence="2">Produced as an inactive single-chain protein (pro-uPA or sc-uPA), is processed into the active disulfide-linked two-chain form of PLAU/uPA by a proteolytic event mediated, at least, by TMPRSS4.</text>
</comment>
<comment type="similarity">
    <text evidence="6">Belongs to the peptidase S1 family.</text>
</comment>
<sequence length="431" mass="48482">MRALLARLLLCVLVVSDSKGSNELHQVPSNCDCLNGGTCVSNKYFSNIHWCNCPKKFGGQHCEIDKSKTCYEGNGHFYRGKASTDTMGRPCLAWNSATVLQQTYHAHRSDALQLGLGKHNYCRNPDNRWRPWCYVQVGLKPLVQECMVHDCADGKKPSSPPEELKFQCGQKTLRPRFKIVGGEFTTIENQPWFAAIYRRHRGGSVTYVCGGSLISPCWVVSATHCFIDYPKKEDYIVYLGRSRLNSHTQGEMKFEVENLILHKDYSADTLAHHNDIALLKIHSKEGRCAQPSRTIQTICLPSMYNDPPFGTSCEITGFGKENSTDYLYPEQLKMTVVKLISHRECQQPHYYGSEVTTKMLCAADPQWKTDSCQGDSGGPLVCSLQGRMTLTGIVSWGRGCALKDKPGVYTRVSYFLPWIRSHTKEENGLAL</sequence>
<reference key="1">
    <citation type="submission" date="2004-11" db="EMBL/GenBank/DDBJ databases">
        <authorList>
            <consortium name="The German cDNA consortium"/>
        </authorList>
    </citation>
    <scope>NUCLEOTIDE SEQUENCE [LARGE SCALE MRNA]</scope>
    <source>
        <tissue>Kidney</tissue>
    </source>
</reference>
<evidence type="ECO:0000250" key="1"/>
<evidence type="ECO:0000250" key="2">
    <source>
        <dbReference type="UniProtKB" id="P00749"/>
    </source>
</evidence>
<evidence type="ECO:0000255" key="3"/>
<evidence type="ECO:0000255" key="4">
    <source>
        <dbReference type="PROSITE-ProRule" id="PRU00076"/>
    </source>
</evidence>
<evidence type="ECO:0000255" key="5">
    <source>
        <dbReference type="PROSITE-ProRule" id="PRU00121"/>
    </source>
</evidence>
<evidence type="ECO:0000255" key="6">
    <source>
        <dbReference type="PROSITE-ProRule" id="PRU00274"/>
    </source>
</evidence>
<gene>
    <name type="primary">PLAU</name>
</gene>
<accession>Q5RF29</accession>
<feature type="signal peptide" evidence="3">
    <location>
        <begin position="1"/>
        <end position="20"/>
    </location>
</feature>
<feature type="chain" id="PRO_0000285896" description="Urokinase-type plasminogen activator">
    <location>
        <begin position="21"/>
        <end position="431"/>
    </location>
</feature>
<feature type="chain" id="PRO_0000285897" description="Urokinase-type plasminogen activator long chain A" evidence="1">
    <location>
        <begin position="21"/>
        <end position="177"/>
    </location>
</feature>
<feature type="chain" id="PRO_0000285898" description="Urokinase-type plasminogen activator short chain A" evidence="1">
    <location>
        <begin position="156"/>
        <end position="177"/>
    </location>
</feature>
<feature type="chain" id="PRO_0000285899" description="Urokinase-type plasminogen activator chain B" evidence="1">
    <location>
        <begin position="179"/>
        <end position="431"/>
    </location>
</feature>
<feature type="domain" description="EGF-like" evidence="4">
    <location>
        <begin position="27"/>
        <end position="63"/>
    </location>
</feature>
<feature type="domain" description="Kringle" evidence="5">
    <location>
        <begin position="69"/>
        <end position="151"/>
    </location>
</feature>
<feature type="domain" description="Peptidase S1" evidence="6">
    <location>
        <begin position="179"/>
        <end position="424"/>
    </location>
</feature>
<feature type="region of interest" description="Binds urokinase plasminogen activator surface receptor" evidence="1">
    <location>
        <begin position="34"/>
        <end position="57"/>
    </location>
</feature>
<feature type="region of interest" description="Connecting peptide" evidence="1">
    <location>
        <begin position="152"/>
        <end position="178"/>
    </location>
</feature>
<feature type="active site" description="Charge relay system" evidence="1">
    <location>
        <position position="224"/>
    </location>
</feature>
<feature type="active site" description="Charge relay system" evidence="1">
    <location>
        <position position="275"/>
    </location>
</feature>
<feature type="active site" description="Charge relay system" evidence="1">
    <location>
        <position position="376"/>
    </location>
</feature>
<feature type="modified residue" description="Phosphoserine" evidence="2">
    <location>
        <position position="158"/>
    </location>
</feature>
<feature type="modified residue" description="Phosphoserine" evidence="2">
    <location>
        <position position="323"/>
    </location>
</feature>
<feature type="glycosylation site" description="N-linked (GlcNAc...) asparagine" evidence="3">
    <location>
        <position position="322"/>
    </location>
</feature>
<feature type="disulfide bond" evidence="1">
    <location>
        <begin position="31"/>
        <end position="39"/>
    </location>
</feature>
<feature type="disulfide bond" evidence="1">
    <location>
        <begin position="33"/>
        <end position="51"/>
    </location>
</feature>
<feature type="disulfide bond" evidence="1">
    <location>
        <begin position="53"/>
        <end position="62"/>
    </location>
</feature>
<feature type="disulfide bond" evidence="1">
    <location>
        <begin position="70"/>
        <end position="151"/>
    </location>
</feature>
<feature type="disulfide bond" evidence="1">
    <location>
        <begin position="91"/>
        <end position="133"/>
    </location>
</feature>
<feature type="disulfide bond" evidence="1">
    <location>
        <begin position="122"/>
        <end position="146"/>
    </location>
</feature>
<feature type="disulfide bond" description="Interchain (between A and B chains)" evidence="4 5 6">
    <location>
        <begin position="168"/>
        <end position="299"/>
    </location>
</feature>
<feature type="disulfide bond" evidence="1">
    <location>
        <begin position="209"/>
        <end position="225"/>
    </location>
</feature>
<feature type="disulfide bond" evidence="1">
    <location>
        <begin position="217"/>
        <end position="288"/>
    </location>
</feature>
<feature type="disulfide bond" evidence="1">
    <location>
        <begin position="313"/>
        <end position="382"/>
    </location>
</feature>
<feature type="disulfide bond" evidence="1">
    <location>
        <begin position="345"/>
        <end position="361"/>
    </location>
</feature>
<feature type="disulfide bond" evidence="1">
    <location>
        <begin position="372"/>
        <end position="400"/>
    </location>
</feature>
<name>UROK_PONAB</name>
<protein>
    <recommendedName>
        <fullName>Urokinase-type plasminogen activator</fullName>
        <shortName>U-plasminogen activator</shortName>
        <shortName>uPA</shortName>
        <ecNumber>3.4.21.73</ecNumber>
    </recommendedName>
    <component>
        <recommendedName>
            <fullName>Urokinase-type plasminogen activator long chain A</fullName>
        </recommendedName>
    </component>
    <component>
        <recommendedName>
            <fullName>Urokinase-type plasminogen activator short chain A</fullName>
        </recommendedName>
    </component>
    <component>
        <recommendedName>
            <fullName>Urokinase-type plasminogen activator chain B</fullName>
        </recommendedName>
    </component>
</protein>
<keyword id="KW-1015">Disulfide bond</keyword>
<keyword id="KW-0245">EGF-like domain</keyword>
<keyword id="KW-0325">Glycoprotein</keyword>
<keyword id="KW-0378">Hydrolase</keyword>
<keyword id="KW-0420">Kringle</keyword>
<keyword id="KW-0597">Phosphoprotein</keyword>
<keyword id="KW-0617">Plasminogen activation</keyword>
<keyword id="KW-0645">Protease</keyword>
<keyword id="KW-1185">Reference proteome</keyword>
<keyword id="KW-0964">Secreted</keyword>
<keyword id="KW-0720">Serine protease</keyword>
<keyword id="KW-0732">Signal</keyword>
<keyword id="KW-0865">Zymogen</keyword>
<dbReference type="EC" id="3.4.21.73"/>
<dbReference type="EMBL" id="CR857332">
    <property type="protein sequence ID" value="CAH89628.1"/>
    <property type="molecule type" value="mRNA"/>
</dbReference>
<dbReference type="RefSeq" id="NP_001124729.1">
    <property type="nucleotide sequence ID" value="NM_001131257.2"/>
</dbReference>
<dbReference type="RefSeq" id="XP_024108710.2">
    <property type="nucleotide sequence ID" value="XM_024252942.3"/>
</dbReference>
<dbReference type="BMRB" id="Q5RF29"/>
<dbReference type="SMR" id="Q5RF29"/>
<dbReference type="FunCoup" id="Q5RF29">
    <property type="interactions" value="370"/>
</dbReference>
<dbReference type="STRING" id="9601.ENSPPYP00000002700"/>
<dbReference type="MEROPS" id="S01.231"/>
<dbReference type="GlyCosmos" id="Q5RF29">
    <property type="glycosylation" value="1 site, No reported glycans"/>
</dbReference>
<dbReference type="GeneID" id="100171578"/>
<dbReference type="KEGG" id="pon:100171578"/>
<dbReference type="CTD" id="5328"/>
<dbReference type="eggNOG" id="ENOG502QRMI">
    <property type="taxonomic scope" value="Eukaryota"/>
</dbReference>
<dbReference type="HOGENOM" id="CLU_006842_18_4_1"/>
<dbReference type="InParanoid" id="Q5RF29"/>
<dbReference type="OrthoDB" id="9406323at2759"/>
<dbReference type="TreeFam" id="TF329901"/>
<dbReference type="Proteomes" id="UP000001595">
    <property type="component" value="Chromosome 10"/>
</dbReference>
<dbReference type="GO" id="GO:0005615">
    <property type="term" value="C:extracellular space"/>
    <property type="evidence" value="ECO:0000250"/>
    <property type="project" value="UniProtKB"/>
</dbReference>
<dbReference type="GO" id="GO:0004252">
    <property type="term" value="F:serine-type endopeptidase activity"/>
    <property type="evidence" value="ECO:0007669"/>
    <property type="project" value="UniProtKB-EC"/>
</dbReference>
<dbReference type="GO" id="GO:0042730">
    <property type="term" value="P:fibrinolysis"/>
    <property type="evidence" value="ECO:0007669"/>
    <property type="project" value="TreeGrafter"/>
</dbReference>
<dbReference type="GO" id="GO:0031639">
    <property type="term" value="P:plasminogen activation"/>
    <property type="evidence" value="ECO:0007669"/>
    <property type="project" value="TreeGrafter"/>
</dbReference>
<dbReference type="GO" id="GO:0033628">
    <property type="term" value="P:regulation of cell adhesion mediated by integrin"/>
    <property type="evidence" value="ECO:0007669"/>
    <property type="project" value="TreeGrafter"/>
</dbReference>
<dbReference type="CDD" id="cd00108">
    <property type="entry name" value="KR"/>
    <property type="match status" value="1"/>
</dbReference>
<dbReference type="CDD" id="cd00190">
    <property type="entry name" value="Tryp_SPc"/>
    <property type="match status" value="1"/>
</dbReference>
<dbReference type="FunFam" id="2.40.10.10:FF:000068">
    <property type="entry name" value="transmembrane protease serine 2"/>
    <property type="match status" value="1"/>
</dbReference>
<dbReference type="FunFam" id="2.10.25.10:FF:000266">
    <property type="entry name" value="Urokinase-type plasminogen activator"/>
    <property type="match status" value="1"/>
</dbReference>
<dbReference type="FunFam" id="2.40.10.10:FF:000065">
    <property type="entry name" value="Urokinase-type plasminogen activator"/>
    <property type="match status" value="1"/>
</dbReference>
<dbReference type="FunFam" id="2.40.20.10:FF:000001">
    <property type="entry name" value="Urokinase-type plasminogen activator"/>
    <property type="match status" value="1"/>
</dbReference>
<dbReference type="Gene3D" id="2.10.25.10">
    <property type="entry name" value="Laminin"/>
    <property type="match status" value="1"/>
</dbReference>
<dbReference type="Gene3D" id="2.40.20.10">
    <property type="entry name" value="Plasminogen Kringle 4"/>
    <property type="match status" value="1"/>
</dbReference>
<dbReference type="Gene3D" id="2.40.10.10">
    <property type="entry name" value="Trypsin-like serine proteases"/>
    <property type="match status" value="2"/>
</dbReference>
<dbReference type="InterPro" id="IPR000742">
    <property type="entry name" value="EGF-like_dom"/>
</dbReference>
<dbReference type="InterPro" id="IPR000001">
    <property type="entry name" value="Kringle"/>
</dbReference>
<dbReference type="InterPro" id="IPR013806">
    <property type="entry name" value="Kringle-like"/>
</dbReference>
<dbReference type="InterPro" id="IPR018056">
    <property type="entry name" value="Kringle_CS"/>
</dbReference>
<dbReference type="InterPro" id="IPR038178">
    <property type="entry name" value="Kringle_sf"/>
</dbReference>
<dbReference type="InterPro" id="IPR009003">
    <property type="entry name" value="Peptidase_S1_PA"/>
</dbReference>
<dbReference type="InterPro" id="IPR043504">
    <property type="entry name" value="Peptidase_S1_PA_chymotrypsin"/>
</dbReference>
<dbReference type="InterPro" id="IPR001314">
    <property type="entry name" value="Peptidase_S1A"/>
</dbReference>
<dbReference type="InterPro" id="IPR050127">
    <property type="entry name" value="Serine_Proteases_S1"/>
</dbReference>
<dbReference type="InterPro" id="IPR001254">
    <property type="entry name" value="Trypsin_dom"/>
</dbReference>
<dbReference type="InterPro" id="IPR018114">
    <property type="entry name" value="TRYPSIN_HIS"/>
</dbReference>
<dbReference type="InterPro" id="IPR033116">
    <property type="entry name" value="TRYPSIN_SER"/>
</dbReference>
<dbReference type="PANTHER" id="PTHR24264">
    <property type="entry name" value="TRYPSIN-RELATED"/>
    <property type="match status" value="1"/>
</dbReference>
<dbReference type="PANTHER" id="PTHR24264:SF38">
    <property type="entry name" value="UROKINASE-TYPE PLASMINOGEN ACTIVATOR"/>
    <property type="match status" value="1"/>
</dbReference>
<dbReference type="Pfam" id="PF00051">
    <property type="entry name" value="Kringle"/>
    <property type="match status" value="1"/>
</dbReference>
<dbReference type="Pfam" id="PF00089">
    <property type="entry name" value="Trypsin"/>
    <property type="match status" value="1"/>
</dbReference>
<dbReference type="PRINTS" id="PR00722">
    <property type="entry name" value="CHYMOTRYPSIN"/>
</dbReference>
<dbReference type="PRINTS" id="PR00018">
    <property type="entry name" value="KRINGLE"/>
</dbReference>
<dbReference type="SMART" id="SM00130">
    <property type="entry name" value="KR"/>
    <property type="match status" value="1"/>
</dbReference>
<dbReference type="SMART" id="SM00020">
    <property type="entry name" value="Tryp_SPc"/>
    <property type="match status" value="1"/>
</dbReference>
<dbReference type="SUPFAM" id="SSF57440">
    <property type="entry name" value="Kringle-like"/>
    <property type="match status" value="1"/>
</dbReference>
<dbReference type="SUPFAM" id="SSF50494">
    <property type="entry name" value="Trypsin-like serine proteases"/>
    <property type="match status" value="1"/>
</dbReference>
<dbReference type="PROSITE" id="PS00022">
    <property type="entry name" value="EGF_1"/>
    <property type="match status" value="1"/>
</dbReference>
<dbReference type="PROSITE" id="PS50026">
    <property type="entry name" value="EGF_3"/>
    <property type="match status" value="1"/>
</dbReference>
<dbReference type="PROSITE" id="PS00021">
    <property type="entry name" value="KRINGLE_1"/>
    <property type="match status" value="1"/>
</dbReference>
<dbReference type="PROSITE" id="PS50070">
    <property type="entry name" value="KRINGLE_2"/>
    <property type="match status" value="1"/>
</dbReference>
<dbReference type="PROSITE" id="PS50240">
    <property type="entry name" value="TRYPSIN_DOM"/>
    <property type="match status" value="1"/>
</dbReference>
<dbReference type="PROSITE" id="PS00134">
    <property type="entry name" value="TRYPSIN_HIS"/>
    <property type="match status" value="1"/>
</dbReference>
<dbReference type="PROSITE" id="PS00135">
    <property type="entry name" value="TRYPSIN_SER"/>
    <property type="match status" value="1"/>
</dbReference>
<proteinExistence type="evidence at transcript level"/>
<organism>
    <name type="scientific">Pongo abelii</name>
    <name type="common">Sumatran orangutan</name>
    <name type="synonym">Pongo pygmaeus abelii</name>
    <dbReference type="NCBI Taxonomy" id="9601"/>
    <lineage>
        <taxon>Eukaryota</taxon>
        <taxon>Metazoa</taxon>
        <taxon>Chordata</taxon>
        <taxon>Craniata</taxon>
        <taxon>Vertebrata</taxon>
        <taxon>Euteleostomi</taxon>
        <taxon>Mammalia</taxon>
        <taxon>Eutheria</taxon>
        <taxon>Euarchontoglires</taxon>
        <taxon>Primates</taxon>
        <taxon>Haplorrhini</taxon>
        <taxon>Catarrhini</taxon>
        <taxon>Hominidae</taxon>
        <taxon>Pongo</taxon>
    </lineage>
</organism>